<accession>B8E2Z9</accession>
<protein>
    <recommendedName>
        <fullName evidence="1">Type III pantothenate kinase</fullName>
        <ecNumber evidence="1">2.7.1.33</ecNumber>
    </recommendedName>
    <alternativeName>
        <fullName evidence="1">PanK-III</fullName>
    </alternativeName>
    <alternativeName>
        <fullName evidence="1">Pantothenic acid kinase</fullName>
    </alternativeName>
</protein>
<gene>
    <name evidence="1" type="primary">coaX</name>
    <name type="ordered locus">Dtur_1220</name>
</gene>
<comment type="function">
    <text evidence="1">Catalyzes the phosphorylation of pantothenate (Pan), the first step in CoA biosynthesis.</text>
</comment>
<comment type="catalytic activity">
    <reaction evidence="1">
        <text>(R)-pantothenate + ATP = (R)-4'-phosphopantothenate + ADP + H(+)</text>
        <dbReference type="Rhea" id="RHEA:16373"/>
        <dbReference type="ChEBI" id="CHEBI:10986"/>
        <dbReference type="ChEBI" id="CHEBI:15378"/>
        <dbReference type="ChEBI" id="CHEBI:29032"/>
        <dbReference type="ChEBI" id="CHEBI:30616"/>
        <dbReference type="ChEBI" id="CHEBI:456216"/>
        <dbReference type="EC" id="2.7.1.33"/>
    </reaction>
</comment>
<comment type="cofactor">
    <cofactor evidence="1">
        <name>NH4(+)</name>
        <dbReference type="ChEBI" id="CHEBI:28938"/>
    </cofactor>
    <cofactor evidence="1">
        <name>K(+)</name>
        <dbReference type="ChEBI" id="CHEBI:29103"/>
    </cofactor>
    <text evidence="1">A monovalent cation. Ammonium or potassium.</text>
</comment>
<comment type="pathway">
    <text evidence="1">Cofactor biosynthesis; coenzyme A biosynthesis; CoA from (R)-pantothenate: step 1/5.</text>
</comment>
<comment type="subunit">
    <text evidence="1">Homodimer.</text>
</comment>
<comment type="subcellular location">
    <subcellularLocation>
        <location evidence="1">Cytoplasm</location>
    </subcellularLocation>
</comment>
<comment type="similarity">
    <text evidence="1">Belongs to the type III pantothenate kinase family.</text>
</comment>
<organism>
    <name type="scientific">Dictyoglomus turgidum (strain DSM 6724 / Z-1310)</name>
    <dbReference type="NCBI Taxonomy" id="515635"/>
    <lineage>
        <taxon>Bacteria</taxon>
        <taxon>Pseudomonadati</taxon>
        <taxon>Dictyoglomota</taxon>
        <taxon>Dictyoglomia</taxon>
        <taxon>Dictyoglomales</taxon>
        <taxon>Dictyoglomaceae</taxon>
        <taxon>Dictyoglomus</taxon>
    </lineage>
</organism>
<keyword id="KW-0067">ATP-binding</keyword>
<keyword id="KW-0173">Coenzyme A biosynthesis</keyword>
<keyword id="KW-0963">Cytoplasm</keyword>
<keyword id="KW-0418">Kinase</keyword>
<keyword id="KW-0479">Metal-binding</keyword>
<keyword id="KW-0547">Nucleotide-binding</keyword>
<keyword id="KW-0630">Potassium</keyword>
<keyword id="KW-1185">Reference proteome</keyword>
<keyword id="KW-0808">Transferase</keyword>
<reference key="1">
    <citation type="journal article" date="2016" name="Front. Microbiol.">
        <title>The complete genome sequence of hyperthermophile Dictyoglomus turgidum DSM 6724 reveals a specialized carbohydrate fermentor.</title>
        <authorList>
            <person name="Brumm P.J."/>
            <person name="Gowda K."/>
            <person name="Robb F.T."/>
            <person name="Mead D.A."/>
        </authorList>
    </citation>
    <scope>NUCLEOTIDE SEQUENCE [LARGE SCALE GENOMIC DNA]</scope>
    <source>
        <strain>DSM 6724 / Z-1310</strain>
    </source>
</reference>
<dbReference type="EC" id="2.7.1.33" evidence="1"/>
<dbReference type="EMBL" id="CP001251">
    <property type="protein sequence ID" value="ACK42499.1"/>
    <property type="molecule type" value="Genomic_DNA"/>
</dbReference>
<dbReference type="RefSeq" id="WP_012583581.1">
    <property type="nucleotide sequence ID" value="NC_011661.1"/>
</dbReference>
<dbReference type="RefSeq" id="YP_002353113.1">
    <property type="nucleotide sequence ID" value="NC_011661.1"/>
</dbReference>
<dbReference type="SMR" id="B8E2Z9"/>
<dbReference type="FunCoup" id="B8E2Z9">
    <property type="interactions" value="322"/>
</dbReference>
<dbReference type="STRING" id="515635.Dtur_1220"/>
<dbReference type="EnsemblBacteria" id="ACK42499">
    <property type="protein sequence ID" value="ACK42499"/>
    <property type="gene ID" value="Dtur_1220"/>
</dbReference>
<dbReference type="KEGG" id="dtu:Dtur_1220"/>
<dbReference type="PATRIC" id="fig|515635.4.peg.1258"/>
<dbReference type="eggNOG" id="COG1521">
    <property type="taxonomic scope" value="Bacteria"/>
</dbReference>
<dbReference type="HOGENOM" id="CLU_066627_1_0_0"/>
<dbReference type="InParanoid" id="B8E2Z9"/>
<dbReference type="OrthoDB" id="9804707at2"/>
<dbReference type="UniPathway" id="UPA00241">
    <property type="reaction ID" value="UER00352"/>
</dbReference>
<dbReference type="Proteomes" id="UP000007719">
    <property type="component" value="Chromosome"/>
</dbReference>
<dbReference type="GO" id="GO:0005737">
    <property type="term" value="C:cytoplasm"/>
    <property type="evidence" value="ECO:0007669"/>
    <property type="project" value="UniProtKB-SubCell"/>
</dbReference>
<dbReference type="GO" id="GO:0005524">
    <property type="term" value="F:ATP binding"/>
    <property type="evidence" value="ECO:0007669"/>
    <property type="project" value="UniProtKB-UniRule"/>
</dbReference>
<dbReference type="GO" id="GO:0046872">
    <property type="term" value="F:metal ion binding"/>
    <property type="evidence" value="ECO:0007669"/>
    <property type="project" value="UniProtKB-KW"/>
</dbReference>
<dbReference type="GO" id="GO:0004594">
    <property type="term" value="F:pantothenate kinase activity"/>
    <property type="evidence" value="ECO:0007669"/>
    <property type="project" value="UniProtKB-UniRule"/>
</dbReference>
<dbReference type="GO" id="GO:0015937">
    <property type="term" value="P:coenzyme A biosynthetic process"/>
    <property type="evidence" value="ECO:0007669"/>
    <property type="project" value="UniProtKB-UniRule"/>
</dbReference>
<dbReference type="CDD" id="cd24015">
    <property type="entry name" value="ASKHA_NBD_PanK-III"/>
    <property type="match status" value="1"/>
</dbReference>
<dbReference type="Gene3D" id="3.30.420.40">
    <property type="match status" value="2"/>
</dbReference>
<dbReference type="HAMAP" id="MF_01274">
    <property type="entry name" value="Pantothen_kinase_3"/>
    <property type="match status" value="1"/>
</dbReference>
<dbReference type="InterPro" id="IPR043129">
    <property type="entry name" value="ATPase_NBD"/>
</dbReference>
<dbReference type="InterPro" id="IPR004619">
    <property type="entry name" value="Type_III_PanK"/>
</dbReference>
<dbReference type="NCBIfam" id="TIGR00671">
    <property type="entry name" value="baf"/>
    <property type="match status" value="1"/>
</dbReference>
<dbReference type="NCBIfam" id="NF009855">
    <property type="entry name" value="PRK13321.1"/>
    <property type="match status" value="1"/>
</dbReference>
<dbReference type="PANTHER" id="PTHR34265">
    <property type="entry name" value="TYPE III PANTOTHENATE KINASE"/>
    <property type="match status" value="1"/>
</dbReference>
<dbReference type="PANTHER" id="PTHR34265:SF1">
    <property type="entry name" value="TYPE III PANTOTHENATE KINASE"/>
    <property type="match status" value="1"/>
</dbReference>
<dbReference type="Pfam" id="PF03309">
    <property type="entry name" value="Pan_kinase"/>
    <property type="match status" value="1"/>
</dbReference>
<dbReference type="SUPFAM" id="SSF53067">
    <property type="entry name" value="Actin-like ATPase domain"/>
    <property type="match status" value="2"/>
</dbReference>
<proteinExistence type="inferred from homology"/>
<evidence type="ECO:0000255" key="1">
    <source>
        <dbReference type="HAMAP-Rule" id="MF_01274"/>
    </source>
</evidence>
<name>COAX_DICTD</name>
<sequence>MILTIDIGNSNIDLAYFNGNKIVSHYEFETKKFSTSYEYALIIEWTLKREKLQEKDILGVALSSVVPSLTSAFIDAIKYLFGKPPFVVEPGIKTGISIETENPKEVGADLICNVVAITEEYGHCGIAVDFGTATTFSVVEKKKFLGAAIAPGVGTSAFALFEKTAKLPQVDIKAPESSLGKNTISAIQAGIVYGFAGLVDGILERQIKELKYKPVLVSTGGWAKRIVPYTKYLKEKDIDPYLTLKGLYYLYLKNL</sequence>
<feature type="chain" id="PRO_1000140241" description="Type III pantothenate kinase">
    <location>
        <begin position="1"/>
        <end position="255"/>
    </location>
</feature>
<feature type="active site" description="Proton acceptor" evidence="1">
    <location>
        <position position="109"/>
    </location>
</feature>
<feature type="binding site" evidence="1">
    <location>
        <begin position="6"/>
        <end position="13"/>
    </location>
    <ligand>
        <name>ATP</name>
        <dbReference type="ChEBI" id="CHEBI:30616"/>
    </ligand>
</feature>
<feature type="binding site" evidence="1">
    <location>
        <begin position="107"/>
        <end position="110"/>
    </location>
    <ligand>
        <name>substrate</name>
    </ligand>
</feature>
<feature type="binding site" evidence="1">
    <location>
        <position position="129"/>
    </location>
    <ligand>
        <name>K(+)</name>
        <dbReference type="ChEBI" id="CHEBI:29103"/>
    </ligand>
</feature>
<feature type="binding site" evidence="1">
    <location>
        <position position="132"/>
    </location>
    <ligand>
        <name>ATP</name>
        <dbReference type="ChEBI" id="CHEBI:30616"/>
    </ligand>
</feature>
<feature type="binding site" evidence="1">
    <location>
        <position position="183"/>
    </location>
    <ligand>
        <name>substrate</name>
    </ligand>
</feature>